<reference key="1">
    <citation type="journal article" date="2004" name="J. Bacteriol.">
        <title>Complete genome sequence of Rickettsia typhi and comparison with sequences of other Rickettsiae.</title>
        <authorList>
            <person name="McLeod M.P."/>
            <person name="Qin X."/>
            <person name="Karpathy S.E."/>
            <person name="Gioia J."/>
            <person name="Highlander S.K."/>
            <person name="Fox G.E."/>
            <person name="McNeill T.Z."/>
            <person name="Jiang H."/>
            <person name="Muzny D."/>
            <person name="Jacob L.S."/>
            <person name="Hawes A.C."/>
            <person name="Sodergren E."/>
            <person name="Gill R."/>
            <person name="Hume J."/>
            <person name="Morgan M."/>
            <person name="Fan G."/>
            <person name="Amin A.G."/>
            <person name="Gibbs R.A."/>
            <person name="Hong C."/>
            <person name="Yu X.-J."/>
            <person name="Walker D.H."/>
            <person name="Weinstock G.M."/>
        </authorList>
    </citation>
    <scope>NUCLEOTIDE SEQUENCE [LARGE SCALE GENOMIC DNA]</scope>
    <source>
        <strain>ATCC VR-144 / Wilmington</strain>
    </source>
</reference>
<evidence type="ECO:0000255" key="1">
    <source>
        <dbReference type="HAMAP-Rule" id="MF_00036"/>
    </source>
</evidence>
<protein>
    <recommendedName>
        <fullName evidence="1">Alanine--tRNA ligase</fullName>
        <ecNumber evidence="1">6.1.1.7</ecNumber>
    </recommendedName>
    <alternativeName>
        <fullName evidence="1">Alanyl-tRNA synthetase</fullName>
        <shortName evidence="1">AlaRS</shortName>
    </alternativeName>
</protein>
<sequence>MTKFTTEEVRSKFITYFKANNHTHVPASSLIPDNDPSLMFVNSGMVQFKNVFTGQEKRSYNKAVTSQKSLRAGGKHNDLEHVGYTARHHTFFEMLGNFSFGDYFKEQAIYYTWDLLTKEFELPKDKLYVTIYHTDDTAASYWEKISGLRDDRIIKIKTNDNFWSMGDTGPCGPCSEIFYDHGEEIYGGLPGTKDEDCDRFIEIWNMVFMQYEQINKETRIELPKKSIDTGMGLERMTAVLQHVNNNYDIDLFQEIINFTENIVKVKVDGEAKFSYRVIADHLRASSFLIADGIIPSNEGRGYVLRRIMRRAMRHAHMLGAKEPLMYKLLPKLVDLMGNIYPELKIAEGFISSILEQEEIRFKTTLERGLKLLTEETKTLTKGNKLSGEVAFKLYDTYGFPLDLTEDILKNRDIAVDHKGFEELMLIQKERARTSWLGSGESKTDQLWFDIKEQYGSTEFLGYTLNEAKCKIIALIKNNNLADTIQEVDTQFLLIANQTPFYGESGGQMGDIGMIFSQDSEVEVIDTLKYLRSIIVHKCILKKGKINIGENANFNIDIKYRKNLRIHHSATHILHAVLHKILGKQVIQKGSLVTSTYLRFDINHSKAITNEEITLIEDKVNEIIRNNHEVNTTVMFTEDAIKQGAIALFGEKYDSEVRVVKIGETSLELCCGTHVKRTGDIGAFKIISESSIAAGVRRIEAVCGEFVIKLIREKDNLIKLIESSVKTNKNELITKVTNILERNKELEKELEKAHLAGLDLSIEQIKKQAEQIAGIKLLYKKVGNINNKILRQAAENLTQKLENLIVVYIAHGVGKLSITVAVSKAITDKFNAGIIAKELSLFLGGSGGGGKASIAQSGGNDIVNLTNINKKLLSLIVT</sequence>
<accession>Q68VQ7</accession>
<keyword id="KW-0030">Aminoacyl-tRNA synthetase</keyword>
<keyword id="KW-0067">ATP-binding</keyword>
<keyword id="KW-0963">Cytoplasm</keyword>
<keyword id="KW-0436">Ligase</keyword>
<keyword id="KW-0479">Metal-binding</keyword>
<keyword id="KW-0547">Nucleotide-binding</keyword>
<keyword id="KW-0648">Protein biosynthesis</keyword>
<keyword id="KW-0694">RNA-binding</keyword>
<keyword id="KW-0820">tRNA-binding</keyword>
<keyword id="KW-0862">Zinc</keyword>
<organism>
    <name type="scientific">Rickettsia typhi (strain ATCC VR-144 / Wilmington)</name>
    <dbReference type="NCBI Taxonomy" id="257363"/>
    <lineage>
        <taxon>Bacteria</taxon>
        <taxon>Pseudomonadati</taxon>
        <taxon>Pseudomonadota</taxon>
        <taxon>Alphaproteobacteria</taxon>
        <taxon>Rickettsiales</taxon>
        <taxon>Rickettsiaceae</taxon>
        <taxon>Rickettsieae</taxon>
        <taxon>Rickettsia</taxon>
        <taxon>typhus group</taxon>
    </lineage>
</organism>
<gene>
    <name evidence="1" type="primary">alaS</name>
    <name type="ordered locus">RT0845</name>
</gene>
<comment type="function">
    <text evidence="1">Catalyzes the attachment of alanine to tRNA(Ala) in a two-step reaction: alanine is first activated by ATP to form Ala-AMP and then transferred to the acceptor end of tRNA(Ala). Also edits incorrectly charged Ser-tRNA(Ala) and Gly-tRNA(Ala) via its editing domain.</text>
</comment>
<comment type="catalytic activity">
    <reaction evidence="1">
        <text>tRNA(Ala) + L-alanine + ATP = L-alanyl-tRNA(Ala) + AMP + diphosphate</text>
        <dbReference type="Rhea" id="RHEA:12540"/>
        <dbReference type="Rhea" id="RHEA-COMP:9657"/>
        <dbReference type="Rhea" id="RHEA-COMP:9923"/>
        <dbReference type="ChEBI" id="CHEBI:30616"/>
        <dbReference type="ChEBI" id="CHEBI:33019"/>
        <dbReference type="ChEBI" id="CHEBI:57972"/>
        <dbReference type="ChEBI" id="CHEBI:78442"/>
        <dbReference type="ChEBI" id="CHEBI:78497"/>
        <dbReference type="ChEBI" id="CHEBI:456215"/>
        <dbReference type="EC" id="6.1.1.7"/>
    </reaction>
</comment>
<comment type="cofactor">
    <cofactor evidence="1">
        <name>Zn(2+)</name>
        <dbReference type="ChEBI" id="CHEBI:29105"/>
    </cofactor>
    <text evidence="1">Binds 1 zinc ion per subunit.</text>
</comment>
<comment type="subcellular location">
    <subcellularLocation>
        <location evidence="1">Cytoplasm</location>
    </subcellularLocation>
</comment>
<comment type="domain">
    <text evidence="1">Consists of three domains; the N-terminal catalytic domain, the editing domain and the C-terminal C-Ala domain. The editing domain removes incorrectly charged amino acids, while the C-Ala domain, along with tRNA(Ala), serves as a bridge to cooperatively bring together the editing and aminoacylation centers thus stimulating deacylation of misacylated tRNAs.</text>
</comment>
<comment type="similarity">
    <text evidence="1">Belongs to the class-II aminoacyl-tRNA synthetase family.</text>
</comment>
<proteinExistence type="inferred from homology"/>
<name>SYA_RICTY</name>
<dbReference type="EC" id="6.1.1.7" evidence="1"/>
<dbReference type="EMBL" id="AE017197">
    <property type="protein sequence ID" value="AAU04299.1"/>
    <property type="molecule type" value="Genomic_DNA"/>
</dbReference>
<dbReference type="RefSeq" id="WP_011191273.1">
    <property type="nucleotide sequence ID" value="NC_006142.1"/>
</dbReference>
<dbReference type="SMR" id="Q68VQ7"/>
<dbReference type="KEGG" id="rty:RT0845"/>
<dbReference type="eggNOG" id="COG0013">
    <property type="taxonomic scope" value="Bacteria"/>
</dbReference>
<dbReference type="HOGENOM" id="CLU_004485_1_1_5"/>
<dbReference type="OrthoDB" id="9803884at2"/>
<dbReference type="Proteomes" id="UP000000604">
    <property type="component" value="Chromosome"/>
</dbReference>
<dbReference type="GO" id="GO:0005829">
    <property type="term" value="C:cytosol"/>
    <property type="evidence" value="ECO:0007669"/>
    <property type="project" value="TreeGrafter"/>
</dbReference>
<dbReference type="GO" id="GO:0004813">
    <property type="term" value="F:alanine-tRNA ligase activity"/>
    <property type="evidence" value="ECO:0007669"/>
    <property type="project" value="UniProtKB-UniRule"/>
</dbReference>
<dbReference type="GO" id="GO:0002161">
    <property type="term" value="F:aminoacyl-tRNA deacylase activity"/>
    <property type="evidence" value="ECO:0007669"/>
    <property type="project" value="TreeGrafter"/>
</dbReference>
<dbReference type="GO" id="GO:0005524">
    <property type="term" value="F:ATP binding"/>
    <property type="evidence" value="ECO:0007669"/>
    <property type="project" value="UniProtKB-UniRule"/>
</dbReference>
<dbReference type="GO" id="GO:0000049">
    <property type="term" value="F:tRNA binding"/>
    <property type="evidence" value="ECO:0007669"/>
    <property type="project" value="UniProtKB-KW"/>
</dbReference>
<dbReference type="GO" id="GO:0008270">
    <property type="term" value="F:zinc ion binding"/>
    <property type="evidence" value="ECO:0007669"/>
    <property type="project" value="UniProtKB-UniRule"/>
</dbReference>
<dbReference type="GO" id="GO:0006419">
    <property type="term" value="P:alanyl-tRNA aminoacylation"/>
    <property type="evidence" value="ECO:0007669"/>
    <property type="project" value="UniProtKB-UniRule"/>
</dbReference>
<dbReference type="GO" id="GO:0045892">
    <property type="term" value="P:negative regulation of DNA-templated transcription"/>
    <property type="evidence" value="ECO:0007669"/>
    <property type="project" value="TreeGrafter"/>
</dbReference>
<dbReference type="CDD" id="cd00673">
    <property type="entry name" value="AlaRS_core"/>
    <property type="match status" value="1"/>
</dbReference>
<dbReference type="FunFam" id="3.10.310.40:FF:000001">
    <property type="entry name" value="Alanine--tRNA ligase"/>
    <property type="match status" value="1"/>
</dbReference>
<dbReference type="FunFam" id="3.30.54.20:FF:000001">
    <property type="entry name" value="Alanine--tRNA ligase"/>
    <property type="match status" value="1"/>
</dbReference>
<dbReference type="FunFam" id="3.30.930.10:FF:000004">
    <property type="entry name" value="Alanine--tRNA ligase"/>
    <property type="match status" value="1"/>
</dbReference>
<dbReference type="FunFam" id="3.30.980.10:FF:000004">
    <property type="entry name" value="Alanine--tRNA ligase, cytoplasmic"/>
    <property type="match status" value="1"/>
</dbReference>
<dbReference type="Gene3D" id="2.40.30.130">
    <property type="match status" value="1"/>
</dbReference>
<dbReference type="Gene3D" id="3.10.310.40">
    <property type="match status" value="1"/>
</dbReference>
<dbReference type="Gene3D" id="3.30.54.20">
    <property type="match status" value="1"/>
</dbReference>
<dbReference type="Gene3D" id="3.30.930.10">
    <property type="entry name" value="Bira Bifunctional Protein, Domain 2"/>
    <property type="match status" value="1"/>
</dbReference>
<dbReference type="Gene3D" id="3.30.980.10">
    <property type="entry name" value="Threonyl-trna Synthetase, Chain A, domain 2"/>
    <property type="match status" value="1"/>
</dbReference>
<dbReference type="HAMAP" id="MF_00036_B">
    <property type="entry name" value="Ala_tRNA_synth_B"/>
    <property type="match status" value="1"/>
</dbReference>
<dbReference type="InterPro" id="IPR045864">
    <property type="entry name" value="aa-tRNA-synth_II/BPL/LPL"/>
</dbReference>
<dbReference type="InterPro" id="IPR002318">
    <property type="entry name" value="Ala-tRNA-lgiase_IIc"/>
</dbReference>
<dbReference type="InterPro" id="IPR018162">
    <property type="entry name" value="Ala-tRNA-ligase_IIc_anticod-bd"/>
</dbReference>
<dbReference type="InterPro" id="IPR018165">
    <property type="entry name" value="Ala-tRNA-synth_IIc_core"/>
</dbReference>
<dbReference type="InterPro" id="IPR018164">
    <property type="entry name" value="Ala-tRNA-synth_IIc_N"/>
</dbReference>
<dbReference type="InterPro" id="IPR050058">
    <property type="entry name" value="Ala-tRNA_ligase"/>
</dbReference>
<dbReference type="InterPro" id="IPR023033">
    <property type="entry name" value="Ala_tRNA_ligase_euk/bac"/>
</dbReference>
<dbReference type="InterPro" id="IPR003156">
    <property type="entry name" value="DHHA1_dom"/>
</dbReference>
<dbReference type="InterPro" id="IPR018163">
    <property type="entry name" value="Thr/Ala-tRNA-synth_IIc_edit"/>
</dbReference>
<dbReference type="InterPro" id="IPR009000">
    <property type="entry name" value="Transl_B-barrel_sf"/>
</dbReference>
<dbReference type="InterPro" id="IPR012947">
    <property type="entry name" value="tRNA_SAD"/>
</dbReference>
<dbReference type="NCBIfam" id="TIGR00344">
    <property type="entry name" value="alaS"/>
    <property type="match status" value="1"/>
</dbReference>
<dbReference type="PANTHER" id="PTHR11777:SF9">
    <property type="entry name" value="ALANINE--TRNA LIGASE, CYTOPLASMIC"/>
    <property type="match status" value="1"/>
</dbReference>
<dbReference type="PANTHER" id="PTHR11777">
    <property type="entry name" value="ALANYL-TRNA SYNTHETASE"/>
    <property type="match status" value="1"/>
</dbReference>
<dbReference type="Pfam" id="PF02272">
    <property type="entry name" value="DHHA1"/>
    <property type="match status" value="1"/>
</dbReference>
<dbReference type="Pfam" id="PF01411">
    <property type="entry name" value="tRNA-synt_2c"/>
    <property type="match status" value="1"/>
</dbReference>
<dbReference type="Pfam" id="PF07973">
    <property type="entry name" value="tRNA_SAD"/>
    <property type="match status" value="1"/>
</dbReference>
<dbReference type="PRINTS" id="PR00980">
    <property type="entry name" value="TRNASYNTHALA"/>
</dbReference>
<dbReference type="SMART" id="SM00863">
    <property type="entry name" value="tRNA_SAD"/>
    <property type="match status" value="1"/>
</dbReference>
<dbReference type="SUPFAM" id="SSF55681">
    <property type="entry name" value="Class II aaRS and biotin synthetases"/>
    <property type="match status" value="1"/>
</dbReference>
<dbReference type="SUPFAM" id="SSF101353">
    <property type="entry name" value="Putative anticodon-binding domain of alanyl-tRNA synthetase (AlaRS)"/>
    <property type="match status" value="1"/>
</dbReference>
<dbReference type="SUPFAM" id="SSF55186">
    <property type="entry name" value="ThrRS/AlaRS common domain"/>
    <property type="match status" value="1"/>
</dbReference>
<dbReference type="SUPFAM" id="SSF50447">
    <property type="entry name" value="Translation proteins"/>
    <property type="match status" value="1"/>
</dbReference>
<dbReference type="PROSITE" id="PS50860">
    <property type="entry name" value="AA_TRNA_LIGASE_II_ALA"/>
    <property type="match status" value="1"/>
</dbReference>
<feature type="chain" id="PRO_0000075193" description="Alanine--tRNA ligase">
    <location>
        <begin position="1"/>
        <end position="877"/>
    </location>
</feature>
<feature type="binding site" evidence="1">
    <location>
        <position position="567"/>
    </location>
    <ligand>
        <name>Zn(2+)</name>
        <dbReference type="ChEBI" id="CHEBI:29105"/>
    </ligand>
</feature>
<feature type="binding site" evidence="1">
    <location>
        <position position="571"/>
    </location>
    <ligand>
        <name>Zn(2+)</name>
        <dbReference type="ChEBI" id="CHEBI:29105"/>
    </ligand>
</feature>
<feature type="binding site" evidence="1">
    <location>
        <position position="669"/>
    </location>
    <ligand>
        <name>Zn(2+)</name>
        <dbReference type="ChEBI" id="CHEBI:29105"/>
    </ligand>
</feature>
<feature type="binding site" evidence="1">
    <location>
        <position position="673"/>
    </location>
    <ligand>
        <name>Zn(2+)</name>
        <dbReference type="ChEBI" id="CHEBI:29105"/>
    </ligand>
</feature>